<accession>Q6R0J2</accession>
<feature type="initiator methionine" description="Removed" evidence="7">
    <location>
        <position position="1"/>
    </location>
</feature>
<feature type="chain" id="PRO_0000054620" description="11-beta-hydroxysteroid dehydrogenase 1">
    <location>
        <begin position="2"/>
        <end position="292"/>
    </location>
</feature>
<feature type="topological domain" description="Cytoplasmic" evidence="4">
    <location>
        <begin position="2"/>
        <end position="7"/>
    </location>
</feature>
<feature type="transmembrane region" description="Helical; Signal-anchor for type II membrane protein" evidence="4">
    <location>
        <begin position="8"/>
        <end position="24"/>
    </location>
</feature>
<feature type="topological domain" description="Lumenal" evidence="4">
    <location>
        <begin position="25"/>
        <end position="292"/>
    </location>
</feature>
<feature type="active site" description="Proton acceptor" evidence="5">
    <location>
        <position position="183"/>
    </location>
</feature>
<feature type="binding site" evidence="2">
    <location>
        <begin position="41"/>
        <end position="67"/>
    </location>
    <ligand>
        <name>NADP(+)</name>
        <dbReference type="ChEBI" id="CHEBI:58349"/>
    </ligand>
</feature>
<feature type="binding site" evidence="2">
    <location>
        <begin position="92"/>
        <end position="93"/>
    </location>
    <ligand>
        <name>NADP(+)</name>
        <dbReference type="ChEBI" id="CHEBI:58349"/>
    </ligand>
</feature>
<feature type="binding site" evidence="2">
    <location>
        <begin position="119"/>
        <end position="121"/>
    </location>
    <ligand>
        <name>NADP(+)</name>
        <dbReference type="ChEBI" id="CHEBI:58349"/>
    </ligand>
</feature>
<feature type="binding site" evidence="1">
    <location>
        <position position="170"/>
    </location>
    <ligand>
        <name>substrate</name>
    </ligand>
</feature>
<feature type="binding site" evidence="2">
    <location>
        <begin position="183"/>
        <end position="187"/>
    </location>
    <ligand>
        <name>NADP(+)</name>
        <dbReference type="ChEBI" id="CHEBI:58349"/>
    </ligand>
</feature>
<feature type="binding site" evidence="2">
    <location>
        <begin position="218"/>
        <end position="222"/>
    </location>
    <ligand>
        <name>NADP(+)</name>
        <dbReference type="ChEBI" id="CHEBI:58349"/>
    </ligand>
</feature>
<feature type="glycosylation site" description="N-linked (GlcNAc...) asparagine" evidence="4">
    <location>
        <position position="162"/>
    </location>
</feature>
<feature type="glycosylation site" description="N-linked (GlcNAc...) asparagine" evidence="4">
    <location>
        <position position="207"/>
    </location>
</feature>
<dbReference type="EC" id="1.1.1.146" evidence="6 7"/>
<dbReference type="EC" id="1.1.1.201" evidence="6 7"/>
<dbReference type="EMBL" id="AY519498">
    <property type="protein sequence ID" value="AAR99903.1"/>
    <property type="molecule type" value="mRNA"/>
</dbReference>
<dbReference type="RefSeq" id="NP_001268282.1">
    <property type="nucleotide sequence ID" value="NM_001281353.1"/>
</dbReference>
<dbReference type="SMR" id="Q6R0J2"/>
<dbReference type="STRING" id="10036.ENSMAUP00000011639"/>
<dbReference type="GlyCosmos" id="Q6R0J2">
    <property type="glycosylation" value="2 sites, No reported glycans"/>
</dbReference>
<dbReference type="GeneID" id="101835279"/>
<dbReference type="KEGG" id="maua:101835279"/>
<dbReference type="CTD" id="3290"/>
<dbReference type="eggNOG" id="KOG1205">
    <property type="taxonomic scope" value="Eukaryota"/>
</dbReference>
<dbReference type="OrthoDB" id="1933717at2759"/>
<dbReference type="BRENDA" id="1.1.1.146">
    <property type="organism ID" value="3239"/>
</dbReference>
<dbReference type="BRENDA" id="1.1.1.B40">
    <property type="organism ID" value="3239"/>
</dbReference>
<dbReference type="SABIO-RK" id="Q6R0J2"/>
<dbReference type="Proteomes" id="UP000189706">
    <property type="component" value="Unplaced"/>
</dbReference>
<dbReference type="GO" id="GO:0005789">
    <property type="term" value="C:endoplasmic reticulum membrane"/>
    <property type="evidence" value="ECO:0007669"/>
    <property type="project" value="UniProtKB-SubCell"/>
</dbReference>
<dbReference type="GO" id="GO:0070524">
    <property type="term" value="F:11-beta-hydroxysteroid dehydrogenase (NADP+) activity"/>
    <property type="evidence" value="ECO:0007669"/>
    <property type="project" value="UniProtKB-EC"/>
</dbReference>
<dbReference type="GO" id="GO:0047022">
    <property type="term" value="F:7-beta-hydroxysteroid dehydrogenase (NADP+) activity"/>
    <property type="evidence" value="ECO:0007669"/>
    <property type="project" value="RHEA"/>
</dbReference>
<dbReference type="GO" id="GO:0008396">
    <property type="term" value="F:oxysterol 7-alpha-hydroxylase activity"/>
    <property type="evidence" value="ECO:0007669"/>
    <property type="project" value="RHEA"/>
</dbReference>
<dbReference type="GO" id="GO:0005496">
    <property type="term" value="F:steroid binding"/>
    <property type="evidence" value="ECO:0007669"/>
    <property type="project" value="TreeGrafter"/>
</dbReference>
<dbReference type="GO" id="GO:0006706">
    <property type="term" value="P:steroid catabolic process"/>
    <property type="evidence" value="ECO:0007669"/>
    <property type="project" value="TreeGrafter"/>
</dbReference>
<dbReference type="CDD" id="cd05332">
    <property type="entry name" value="11beta-HSD1_like_SDR_c"/>
    <property type="match status" value="1"/>
</dbReference>
<dbReference type="FunFam" id="3.40.50.720:FF:000329">
    <property type="entry name" value="Corticosteroid 11-beta-dehydrogenase isozyme 1"/>
    <property type="match status" value="1"/>
</dbReference>
<dbReference type="Gene3D" id="3.40.50.720">
    <property type="entry name" value="NAD(P)-binding Rossmann-like Domain"/>
    <property type="match status" value="1"/>
</dbReference>
<dbReference type="InterPro" id="IPR051253">
    <property type="entry name" value="11-beta-HSD"/>
</dbReference>
<dbReference type="InterPro" id="IPR036291">
    <property type="entry name" value="NAD(P)-bd_dom_sf"/>
</dbReference>
<dbReference type="InterPro" id="IPR020904">
    <property type="entry name" value="Sc_DH/Rdtase_CS"/>
</dbReference>
<dbReference type="InterPro" id="IPR002347">
    <property type="entry name" value="SDR_fam"/>
</dbReference>
<dbReference type="PANTHER" id="PTHR44279:SF1">
    <property type="entry name" value="11-BETA-HYDROXYSTEROID DEHYDROGENASE 1"/>
    <property type="match status" value="1"/>
</dbReference>
<dbReference type="PANTHER" id="PTHR44279">
    <property type="entry name" value="HYDROXYSTEROID (11-BETA) DEHYDROGENASE 1-LIKE B-RELATED"/>
    <property type="match status" value="1"/>
</dbReference>
<dbReference type="Pfam" id="PF00106">
    <property type="entry name" value="adh_short"/>
    <property type="match status" value="1"/>
</dbReference>
<dbReference type="PRINTS" id="PR00081">
    <property type="entry name" value="GDHRDH"/>
</dbReference>
<dbReference type="SUPFAM" id="SSF51735">
    <property type="entry name" value="NAD(P)-binding Rossmann-fold domains"/>
    <property type="match status" value="1"/>
</dbReference>
<dbReference type="PROSITE" id="PS00061">
    <property type="entry name" value="ADH_SHORT"/>
    <property type="match status" value="1"/>
</dbReference>
<sequence length="292" mass="32305">MHFMKKYLLPILVLFLAYYYYSTKEEFRPEMLQGKKVIVTGASKGIGREMAYHLSEMGAHVVLTARSEEGLQKVASRCLELGAASAHYIAGTMEDMTFAEQFVLKAGKLMGGLDMLILNHITYTSMNFFRDEIHALRKAMEVNFISYVVMSVAALPMLKQSNGSIVVVSSIAGKMAHPLVASYSASKFALDGFFSSLRREHGVTNVNVSITLCVLGLINTETAMKATSGVFNAPASPKEECALEIIKGGALRQEEVYYDSWSWTPILLGNPGRKIMEFLSMKSFTFDKLISS</sequence>
<gene>
    <name type="primary">HSD11B1</name>
</gene>
<comment type="function">
    <text evidence="2 3 6 7">Controls the reversible conversion of biologically active glucocorticoids such as 11-dehydrocorticosterone to corticosterone in the presence of NADP(H) (PubMed:14973125). Participates in the corticosteroid receptor-mediated anti-inflammatory response, as well as metabolic and homeostatic processes (By similarity). Bidirectional in vitro, predominantly functions as a reductase in vivo, thereby increasing the concentration of active glucocorticoids (By similarity). It has broad substrate specificity, besides glucocorticoids, it accepts other steroid and sterol substrates (PubMed:14973125, PubMed:9632680). Interconverts 7-oxo- and 7-hydroxy-neurosteroids such as 7-oxopregnenolone and 7beta-hydroxypregnenolone, 7-oxodehydroepiandrosterone (3beta-hydroxy-5-androstene-7,17-dione) and 7beta-hydroxydehydroepiandrosterone (3beta,7beta-dihydroxyandrost-5-en-17-one), among others (By similarity). Catalyzes reversibly the conversion of the major dietary oxysterol, 7-ketocholesterol (7-oxocholesterol), into the more polar 7-beta-hydroxycholesterol and 7-alpha-hhydroxycholesterol metabolites (PubMed:14973125, PubMed:9632680). 7-oxocholesterol is one of the most important oxysterols, it participates in several events such as induction of apoptosis, accumulation in atherosclerotic lesions, lipid peroxidation, and induction of foam cell formation (By similarity). Mediates the 7-oxo reduction of 7-oxolithocholate mainly to chenodeoxycholate, and to a lesser extent to ursodeoxycholate, both in its free form and when conjugated to glycine or taurine, providing a link between glucocorticoid activation and bile acid metabolism (By similarity). Catalyzes the synthesis of 7-beta-25-dihydroxycholesterol from 7-oxo-25-hydroxycholesterol in vitro, which acts as a ligand for the G-protein-coupled receptor (GPCR) Epstein-Barr virus-induced gene 2 (EBI2) and may thereby regulate immune cell migration (By similarity).</text>
</comment>
<comment type="catalytic activity">
    <reaction evidence="6 7">
        <text>an 11beta-hydroxysteroid + NADP(+) = an 11-oxosteroid + NADPH + H(+)</text>
        <dbReference type="Rhea" id="RHEA:11388"/>
        <dbReference type="ChEBI" id="CHEBI:15378"/>
        <dbReference type="ChEBI" id="CHEBI:35346"/>
        <dbReference type="ChEBI" id="CHEBI:47787"/>
        <dbReference type="ChEBI" id="CHEBI:57783"/>
        <dbReference type="ChEBI" id="CHEBI:58349"/>
        <dbReference type="EC" id="1.1.1.146"/>
    </reaction>
    <physiologicalReaction direction="left-to-right" evidence="6 7">
        <dbReference type="Rhea" id="RHEA:11389"/>
    </physiologicalReaction>
    <physiologicalReaction direction="right-to-left" evidence="6">
        <dbReference type="Rhea" id="RHEA:11390"/>
    </physiologicalReaction>
</comment>
<comment type="catalytic activity">
    <reaction evidence="6 7">
        <text>corticosterone + NADP(+) = 11-dehydrocorticosterone + NADPH + H(+)</text>
        <dbReference type="Rhea" id="RHEA:42200"/>
        <dbReference type="ChEBI" id="CHEBI:15378"/>
        <dbReference type="ChEBI" id="CHEBI:16827"/>
        <dbReference type="ChEBI" id="CHEBI:57783"/>
        <dbReference type="ChEBI" id="CHEBI:58349"/>
        <dbReference type="ChEBI" id="CHEBI:78600"/>
    </reaction>
    <physiologicalReaction direction="left-to-right" evidence="6 7">
        <dbReference type="Rhea" id="RHEA:42201"/>
    </physiologicalReaction>
    <physiologicalReaction direction="right-to-left" evidence="6">
        <dbReference type="Rhea" id="RHEA:42202"/>
    </physiologicalReaction>
</comment>
<comment type="catalytic activity">
    <reaction evidence="2">
        <text>a 7beta-hydroxysteroid + NADP(+) = a 7-oxosteroid + NADPH + H(+)</text>
        <dbReference type="Rhea" id="RHEA:20233"/>
        <dbReference type="ChEBI" id="CHEBI:15378"/>
        <dbReference type="ChEBI" id="CHEBI:35349"/>
        <dbReference type="ChEBI" id="CHEBI:47789"/>
        <dbReference type="ChEBI" id="CHEBI:57783"/>
        <dbReference type="ChEBI" id="CHEBI:58349"/>
        <dbReference type="EC" id="1.1.1.201"/>
    </reaction>
    <physiologicalReaction direction="right-to-left" evidence="2">
        <dbReference type="Rhea" id="RHEA:20235"/>
    </physiologicalReaction>
</comment>
<comment type="catalytic activity">
    <reaction evidence="6">
        <text>7-oxocholesterol + NADPH + H(+) = 7beta-hydroxycholesterol + NADP(+)</text>
        <dbReference type="Rhea" id="RHEA:68656"/>
        <dbReference type="ChEBI" id="CHEBI:15378"/>
        <dbReference type="ChEBI" id="CHEBI:42989"/>
        <dbReference type="ChEBI" id="CHEBI:57783"/>
        <dbReference type="ChEBI" id="CHEBI:58349"/>
        <dbReference type="ChEBI" id="CHEBI:64294"/>
    </reaction>
    <physiologicalReaction direction="left-to-right" evidence="6">
        <dbReference type="Rhea" id="RHEA:68657"/>
    </physiologicalReaction>
</comment>
<comment type="catalytic activity">
    <reaction evidence="6 7">
        <text>7-oxocholesterol + NADPH + H(+) = 7alpha-hydroxycholesterol + NADP(+)</text>
        <dbReference type="Rhea" id="RHEA:68740"/>
        <dbReference type="ChEBI" id="CHEBI:15378"/>
        <dbReference type="ChEBI" id="CHEBI:17500"/>
        <dbReference type="ChEBI" id="CHEBI:57783"/>
        <dbReference type="ChEBI" id="CHEBI:58349"/>
        <dbReference type="ChEBI" id="CHEBI:64294"/>
    </reaction>
    <physiologicalReaction direction="left-to-right" evidence="6">
        <dbReference type="Rhea" id="RHEA:68741"/>
    </physiologicalReaction>
    <physiologicalReaction direction="right-to-left" evidence="7">
        <dbReference type="Rhea" id="RHEA:68742"/>
    </physiologicalReaction>
</comment>
<comment type="catalytic activity">
    <reaction evidence="2">
        <text>chenodeoxycholate + NADP(+) = 7-oxolithocholate + NADPH + H(+)</text>
        <dbReference type="Rhea" id="RHEA:53820"/>
        <dbReference type="ChEBI" id="CHEBI:15378"/>
        <dbReference type="ChEBI" id="CHEBI:36234"/>
        <dbReference type="ChEBI" id="CHEBI:57783"/>
        <dbReference type="ChEBI" id="CHEBI:58349"/>
        <dbReference type="ChEBI" id="CHEBI:78605"/>
    </reaction>
    <physiologicalReaction direction="right-to-left" evidence="2">
        <dbReference type="Rhea" id="RHEA:53822"/>
    </physiologicalReaction>
</comment>
<comment type="catalytic activity">
    <reaction evidence="2">
        <text>7-oxolithocholate + NADPH + H(+) = ursodeoxycholate + NADP(+)</text>
        <dbReference type="Rhea" id="RHEA:47540"/>
        <dbReference type="ChEBI" id="CHEBI:15378"/>
        <dbReference type="ChEBI" id="CHEBI:57783"/>
        <dbReference type="ChEBI" id="CHEBI:58349"/>
        <dbReference type="ChEBI" id="CHEBI:78604"/>
        <dbReference type="ChEBI" id="CHEBI:78605"/>
    </reaction>
    <physiologicalReaction direction="left-to-right" evidence="2">
        <dbReference type="Rhea" id="RHEA:47541"/>
    </physiologicalReaction>
</comment>
<comment type="catalytic activity">
    <reaction evidence="2">
        <text>glycochenodeoxycholate + NADP(+) = 7-oxoglycolithocholate + NADPH + H(+)</text>
        <dbReference type="Rhea" id="RHEA:65056"/>
        <dbReference type="ChEBI" id="CHEBI:15378"/>
        <dbReference type="ChEBI" id="CHEBI:36252"/>
        <dbReference type="ChEBI" id="CHEBI:57783"/>
        <dbReference type="ChEBI" id="CHEBI:58349"/>
        <dbReference type="ChEBI" id="CHEBI:137818"/>
    </reaction>
    <physiologicalReaction direction="right-to-left" evidence="2">
        <dbReference type="Rhea" id="RHEA:65058"/>
    </physiologicalReaction>
</comment>
<comment type="catalytic activity">
    <reaction evidence="2">
        <text>taurochenodeoxycholate + NADP(+) = 7-oxotaurolithocholate + NADPH + H(+)</text>
        <dbReference type="Rhea" id="RHEA:65060"/>
        <dbReference type="ChEBI" id="CHEBI:9407"/>
        <dbReference type="ChEBI" id="CHEBI:15378"/>
        <dbReference type="ChEBI" id="CHEBI:57783"/>
        <dbReference type="ChEBI" id="CHEBI:58349"/>
        <dbReference type="ChEBI" id="CHEBI:137724"/>
    </reaction>
    <physiologicalReaction direction="right-to-left" evidence="2">
        <dbReference type="Rhea" id="RHEA:65062"/>
    </physiologicalReaction>
</comment>
<comment type="catalytic activity">
    <reaction evidence="2">
        <text>tauroursodeoxycholate + NADP(+) = 7-oxotaurolithocholate + NADPH + H(+)</text>
        <dbReference type="Rhea" id="RHEA:68980"/>
        <dbReference type="ChEBI" id="CHEBI:15378"/>
        <dbReference type="ChEBI" id="CHEBI:57783"/>
        <dbReference type="ChEBI" id="CHEBI:58349"/>
        <dbReference type="ChEBI" id="CHEBI:132028"/>
        <dbReference type="ChEBI" id="CHEBI:137724"/>
    </reaction>
    <physiologicalReaction direction="right-to-left" evidence="2">
        <dbReference type="Rhea" id="RHEA:68982"/>
    </physiologicalReaction>
</comment>
<comment type="catalytic activity">
    <reaction evidence="2">
        <text>glycoursodeoxycholate + NADP(+) = 7-oxoglycolithocholate + NADPH + H(+)</text>
        <dbReference type="Rhea" id="RHEA:68976"/>
        <dbReference type="ChEBI" id="CHEBI:15378"/>
        <dbReference type="ChEBI" id="CHEBI:57783"/>
        <dbReference type="ChEBI" id="CHEBI:58349"/>
        <dbReference type="ChEBI" id="CHEBI:132030"/>
        <dbReference type="ChEBI" id="CHEBI:137818"/>
    </reaction>
    <physiologicalReaction direction="right-to-left" evidence="2">
        <dbReference type="Rhea" id="RHEA:68978"/>
    </physiologicalReaction>
</comment>
<comment type="catalytic activity">
    <reaction evidence="2">
        <text>7-oxopregnenolone + NADPH + H(+) = 7beta-hydroxypregnenolone + NADP(+)</text>
        <dbReference type="Rhea" id="RHEA:69436"/>
        <dbReference type="ChEBI" id="CHEBI:15378"/>
        <dbReference type="ChEBI" id="CHEBI:57783"/>
        <dbReference type="ChEBI" id="CHEBI:58349"/>
        <dbReference type="ChEBI" id="CHEBI:183806"/>
        <dbReference type="ChEBI" id="CHEBI:183807"/>
    </reaction>
    <physiologicalReaction direction="left-to-right" evidence="2">
        <dbReference type="Rhea" id="RHEA:69437"/>
    </physiologicalReaction>
</comment>
<comment type="catalytic activity">
    <reaction evidence="2">
        <text>3beta,7alpha-dihydroxyandrost-5-en-17-one + NADP(+) = 3beta-hydroxy-5-androstene-7,17-dione + NADPH + H(+)</text>
        <dbReference type="Rhea" id="RHEA:69440"/>
        <dbReference type="ChEBI" id="CHEBI:15378"/>
        <dbReference type="ChEBI" id="CHEBI:57783"/>
        <dbReference type="ChEBI" id="CHEBI:58349"/>
        <dbReference type="ChEBI" id="CHEBI:81471"/>
        <dbReference type="ChEBI" id="CHEBI:183808"/>
    </reaction>
    <physiologicalReaction direction="left-to-right" evidence="2">
        <dbReference type="Rhea" id="RHEA:69441"/>
    </physiologicalReaction>
</comment>
<comment type="catalytic activity">
    <reaction evidence="2">
        <text>3beta-hydroxy-5-androstene-7,17-dione + NADPH + H(+) = 3beta,7beta-dihydroxyandrost-5-en-17-one + NADP(+)</text>
        <dbReference type="Rhea" id="RHEA:69452"/>
        <dbReference type="ChEBI" id="CHEBI:15378"/>
        <dbReference type="ChEBI" id="CHEBI:57783"/>
        <dbReference type="ChEBI" id="CHEBI:58349"/>
        <dbReference type="ChEBI" id="CHEBI:183368"/>
        <dbReference type="ChEBI" id="CHEBI:183808"/>
    </reaction>
    <physiologicalReaction direction="left-to-right" evidence="2">
        <dbReference type="Rhea" id="RHEA:69453"/>
    </physiologicalReaction>
</comment>
<comment type="catalytic activity">
    <reaction evidence="2">
        <text>3beta-hydroxy-5alpha-androstane-7,17-dione + NADPH + H(+) = 3beta,7beta-dihydroxy-5alpha-androstan-17-one + NADP(+)</text>
        <dbReference type="Rhea" id="RHEA:69456"/>
        <dbReference type="ChEBI" id="CHEBI:15378"/>
        <dbReference type="ChEBI" id="CHEBI:57783"/>
        <dbReference type="ChEBI" id="CHEBI:58349"/>
        <dbReference type="ChEBI" id="CHEBI:79834"/>
        <dbReference type="ChEBI" id="CHEBI:183809"/>
    </reaction>
    <physiologicalReaction direction="left-to-right" evidence="2">
        <dbReference type="Rhea" id="RHEA:69457"/>
    </physiologicalReaction>
</comment>
<comment type="biophysicochemical properties">
    <kinetics>
        <KM evidence="6">321 nM for corticosterone</KM>
        <KM evidence="6">726 nM for 11-dehydrocorticosterone</KM>
        <KM evidence="6">549 nM for 7-oxocholesterol</KM>
        <KM evidence="7">1.2 uM for corticosterone</KM>
        <KM evidence="7">1.9 uM for 7-alpha-hydroxycholesterol</KM>
        <KM evidence="7">1.8 uM for 7-beta-hydroxycholesterol</KM>
        <Vmax evidence="7">180.0 nmol/min/mg enzyme with corticosterone as substrate</Vmax>
        <Vmax evidence="7">160.0 nmol/min/mg enzyme with 7-alpha-hydroxycholesterol as substrate</Vmax>
        <Vmax evidence="7">140.0 nmol/min/mg enzyme with 7-beta-hydroxycholesterol as substrate</Vmax>
        <Vmax evidence="6">1.2 nmol/min/mg enzyme with corticosterone as substrate</Vmax>
        <Vmax evidence="6">0.56 nmol/min/mg enzyme with 11-dehydrocorticosterone as substrate</Vmax>
        <Vmax evidence="6">0.2 nmol/min/mg enzyme with 7-oxocholesterol as substrate</Vmax>
    </kinetics>
</comment>
<comment type="pathway">
    <text evidence="10">Steroid metabolism.</text>
</comment>
<comment type="subunit">
    <text evidence="2">Homodimer.</text>
</comment>
<comment type="subcellular location">
    <subcellularLocation>
        <location evidence="7">Endoplasmic reticulum membrane</location>
        <topology evidence="7">Single-pass type II membrane protein</topology>
    </subcellularLocation>
</comment>
<comment type="tissue specificity">
    <text evidence="7">Detected in adrenal gland, liver, kidney, testis, and at lower levels in brain and lung (at protein level).</text>
</comment>
<comment type="similarity">
    <text evidence="10">Belongs to the short-chain dehydrogenases/reductases (SDR) family.</text>
</comment>
<organism>
    <name type="scientific">Mesocricetus auratus</name>
    <name type="common">Golden hamster</name>
    <dbReference type="NCBI Taxonomy" id="10036"/>
    <lineage>
        <taxon>Eukaryota</taxon>
        <taxon>Metazoa</taxon>
        <taxon>Chordata</taxon>
        <taxon>Craniata</taxon>
        <taxon>Vertebrata</taxon>
        <taxon>Euteleostomi</taxon>
        <taxon>Mammalia</taxon>
        <taxon>Eutheria</taxon>
        <taxon>Euarchontoglires</taxon>
        <taxon>Glires</taxon>
        <taxon>Rodentia</taxon>
        <taxon>Myomorpha</taxon>
        <taxon>Muroidea</taxon>
        <taxon>Cricetidae</taxon>
        <taxon>Cricetinae</taxon>
        <taxon>Mesocricetus</taxon>
    </lineage>
</organism>
<proteinExistence type="evidence at protein level"/>
<name>DHI1_MESAU</name>
<keyword id="KW-0903">Direct protein sequencing</keyword>
<keyword id="KW-0256">Endoplasmic reticulum</keyword>
<keyword id="KW-0325">Glycoprotein</keyword>
<keyword id="KW-0443">Lipid metabolism</keyword>
<keyword id="KW-0472">Membrane</keyword>
<keyword id="KW-0521">NADP</keyword>
<keyword id="KW-0560">Oxidoreductase</keyword>
<keyword id="KW-1185">Reference proteome</keyword>
<keyword id="KW-0735">Signal-anchor</keyword>
<keyword id="KW-0753">Steroid metabolism</keyword>
<keyword id="KW-0812">Transmembrane</keyword>
<keyword id="KW-1133">Transmembrane helix</keyword>
<protein>
    <recommendedName>
        <fullName evidence="8">11-beta-hydroxysteroid dehydrogenase 1</fullName>
        <shortName>11-DH</shortName>
        <shortName evidence="8">11-beta-HSD1</shortName>
        <ecNumber evidence="6 7">1.1.1.146</ecNumber>
    </recommendedName>
    <alternativeName>
        <fullName evidence="9">7-alpha-hydroxycholesterol dehydrogenase</fullName>
        <shortName evidence="9">7-alpha-HCD</shortName>
    </alternativeName>
    <alternativeName>
        <fullName>7-oxosteroid reductase</fullName>
        <ecNumber evidence="6 7">1.1.1.201</ecNumber>
    </alternativeName>
    <alternativeName>
        <fullName>Corticosteroid 11-beta-dehydrogenase isozyme 1</fullName>
    </alternativeName>
</protein>
<reference key="1">
    <citation type="journal article" date="2004" name="J. Biol. Chem.">
        <title>Rapid hepatic metabolism of 7-ketocholesterol by 11beta-hydroxysteroid dehydrogenase type 1: species-specific differences between the rat, human, and hamster enzyme.</title>
        <authorList>
            <person name="Schweizer R.A.S."/>
            <person name="Zuercher M."/>
            <person name="Balazs Z."/>
            <person name="Dick B."/>
            <person name="Odermatt A."/>
        </authorList>
    </citation>
    <scope>NUCLEOTIDE SEQUENCE [MRNA]</scope>
    <scope>FUNCTION</scope>
    <scope>CATALYTIC ACTIVITY</scope>
    <scope>BIOPHYSICOCHEMICAL PROPERTIES</scope>
    <source>
        <tissue>Liver</tissue>
    </source>
</reference>
<reference key="2">
    <citation type="journal article" date="1998" name="J. Biol. Chem.">
        <title>Purification and characterization of hamster liver microsomal 7alpha-hydroxycholesterol dehydrogenase. Similarity to type I 11beta-hydroxysteroid dehydrogenase.</title>
        <authorList>
            <person name="Song W."/>
            <person name="Chen J."/>
            <person name="Dean W.L."/>
            <person name="Redinger R.N."/>
            <person name="Prough R.A."/>
        </authorList>
    </citation>
    <scope>PROTEIN SEQUENCE OF 2-31</scope>
    <scope>FUNCTION</scope>
    <scope>CATALYTIC ACTIVITY</scope>
    <scope>SUBCELLULAR LOCATION</scope>
    <scope>NADP REQUIREMENT</scope>
    <scope>TISSUE SPECIFICITY</scope>
    <scope>BIOPHYSICOCHEMICAL PROPERTIES</scope>
</reference>
<evidence type="ECO:0000250" key="1"/>
<evidence type="ECO:0000250" key="2">
    <source>
        <dbReference type="UniProtKB" id="P28845"/>
    </source>
</evidence>
<evidence type="ECO:0000250" key="3">
    <source>
        <dbReference type="UniProtKB" id="P50172"/>
    </source>
</evidence>
<evidence type="ECO:0000255" key="4"/>
<evidence type="ECO:0000255" key="5">
    <source>
        <dbReference type="PROSITE-ProRule" id="PRU10001"/>
    </source>
</evidence>
<evidence type="ECO:0000269" key="6">
    <source>
    </source>
</evidence>
<evidence type="ECO:0000269" key="7">
    <source>
    </source>
</evidence>
<evidence type="ECO:0000303" key="8">
    <source>
    </source>
</evidence>
<evidence type="ECO:0000303" key="9">
    <source>
    </source>
</evidence>
<evidence type="ECO:0000305" key="10"/>